<proteinExistence type="evidence at protein level"/>
<accession>P99172</accession>
<accession>Q99RS7</accession>
<keyword id="KW-0963">Cytoplasm</keyword>
<keyword id="KW-0285">Flavoprotein</keyword>
<keyword id="KW-0288">FMN</keyword>
<keyword id="KW-0413">Isomerase</keyword>
<keyword id="KW-0414">Isoprene biosynthesis</keyword>
<keyword id="KW-0460">Magnesium</keyword>
<keyword id="KW-0479">Metal-binding</keyword>
<keyword id="KW-0521">NADP</keyword>
<feature type="chain" id="PRO_0000134422" description="Isopentenyl-diphosphate delta-isomerase">
    <location>
        <begin position="1"/>
        <end position="349"/>
    </location>
</feature>
<feature type="binding site" evidence="1">
    <location>
        <begin position="9"/>
        <end position="10"/>
    </location>
    <ligand>
        <name>substrate</name>
    </ligand>
</feature>
<feature type="binding site" evidence="1">
    <location>
        <begin position="65"/>
        <end position="67"/>
    </location>
    <ligand>
        <name>FMN</name>
        <dbReference type="ChEBI" id="CHEBI:58210"/>
    </ligand>
</feature>
<feature type="binding site" evidence="1">
    <location>
        <begin position="95"/>
        <end position="97"/>
    </location>
    <ligand>
        <name>substrate</name>
    </ligand>
</feature>
<feature type="binding site" evidence="1">
    <location>
        <position position="95"/>
    </location>
    <ligand>
        <name>FMN</name>
        <dbReference type="ChEBI" id="CHEBI:58210"/>
    </ligand>
</feature>
<feature type="binding site" evidence="1">
    <location>
        <position position="124"/>
    </location>
    <ligand>
        <name>FMN</name>
        <dbReference type="ChEBI" id="CHEBI:58210"/>
    </ligand>
</feature>
<feature type="binding site" evidence="1">
    <location>
        <position position="154"/>
    </location>
    <ligand>
        <name>substrate</name>
    </ligand>
</feature>
<feature type="binding site" evidence="1">
    <location>
        <position position="155"/>
    </location>
    <ligand>
        <name>Mg(2+)</name>
        <dbReference type="ChEBI" id="CHEBI:18420"/>
    </ligand>
</feature>
<feature type="binding site" evidence="1">
    <location>
        <position position="186"/>
    </location>
    <ligand>
        <name>FMN</name>
        <dbReference type="ChEBI" id="CHEBI:58210"/>
    </ligand>
</feature>
<feature type="binding site" evidence="1">
    <location>
        <position position="211"/>
    </location>
    <ligand>
        <name>FMN</name>
        <dbReference type="ChEBI" id="CHEBI:58210"/>
    </ligand>
</feature>
<feature type="binding site" evidence="1">
    <location>
        <position position="216"/>
    </location>
    <ligand>
        <name>FMN</name>
        <dbReference type="ChEBI" id="CHEBI:58210"/>
    </ligand>
</feature>
<feature type="binding site" evidence="1">
    <location>
        <begin position="262"/>
        <end position="264"/>
    </location>
    <ligand>
        <name>FMN</name>
        <dbReference type="ChEBI" id="CHEBI:58210"/>
    </ligand>
</feature>
<feature type="binding site" evidence="1">
    <location>
        <begin position="283"/>
        <end position="284"/>
    </location>
    <ligand>
        <name>FMN</name>
        <dbReference type="ChEBI" id="CHEBI:58210"/>
    </ligand>
</feature>
<protein>
    <recommendedName>
        <fullName evidence="1">Isopentenyl-diphosphate delta-isomerase</fullName>
        <shortName evidence="1">IPP isomerase</shortName>
        <ecNumber evidence="1">5.3.3.2</ecNumber>
    </recommendedName>
    <alternativeName>
        <fullName evidence="1">Isopentenyl diphosphate:dimethylallyl diphosphate isomerase</fullName>
    </alternativeName>
    <alternativeName>
        <fullName evidence="1">Isopentenyl pyrophosphate isomerase</fullName>
    </alternativeName>
    <alternativeName>
        <fullName evidence="1">Type 2 isopentenyl diphosphate isomerase</fullName>
        <shortName evidence="1">IDI-2</shortName>
    </alternativeName>
</protein>
<evidence type="ECO:0000255" key="1">
    <source>
        <dbReference type="HAMAP-Rule" id="MF_00354"/>
    </source>
</evidence>
<gene>
    <name evidence="1" type="primary">fni</name>
    <name type="ordered locus">SA2136</name>
</gene>
<name>IDI2_STAAN</name>
<reference key="1">
    <citation type="journal article" date="2001" name="Lancet">
        <title>Whole genome sequencing of meticillin-resistant Staphylococcus aureus.</title>
        <authorList>
            <person name="Kuroda M."/>
            <person name="Ohta T."/>
            <person name="Uchiyama I."/>
            <person name="Baba T."/>
            <person name="Yuzawa H."/>
            <person name="Kobayashi I."/>
            <person name="Cui L."/>
            <person name="Oguchi A."/>
            <person name="Aoki K."/>
            <person name="Nagai Y."/>
            <person name="Lian J.-Q."/>
            <person name="Ito T."/>
            <person name="Kanamori M."/>
            <person name="Matsumaru H."/>
            <person name="Maruyama A."/>
            <person name="Murakami H."/>
            <person name="Hosoyama A."/>
            <person name="Mizutani-Ui Y."/>
            <person name="Takahashi N.K."/>
            <person name="Sawano T."/>
            <person name="Inoue R."/>
            <person name="Kaito C."/>
            <person name="Sekimizu K."/>
            <person name="Hirakawa H."/>
            <person name="Kuhara S."/>
            <person name="Goto S."/>
            <person name="Yabuzaki J."/>
            <person name="Kanehisa M."/>
            <person name="Yamashita A."/>
            <person name="Oshima K."/>
            <person name="Furuya K."/>
            <person name="Yoshino C."/>
            <person name="Shiba T."/>
            <person name="Hattori M."/>
            <person name="Ogasawara N."/>
            <person name="Hayashi H."/>
            <person name="Hiramatsu K."/>
        </authorList>
    </citation>
    <scope>NUCLEOTIDE SEQUENCE [LARGE SCALE GENOMIC DNA]</scope>
    <source>
        <strain>N315</strain>
    </source>
</reference>
<reference key="2">
    <citation type="journal article" date="2005" name="J. Microbiol. Methods">
        <title>Correlation of proteomic and transcriptomic profiles of Staphylococcus aureus during the post-exponential phase of growth.</title>
        <authorList>
            <person name="Scherl A."/>
            <person name="Francois P."/>
            <person name="Bento M."/>
            <person name="Deshusses J.M."/>
            <person name="Charbonnier Y."/>
            <person name="Converset V."/>
            <person name="Huyghe A."/>
            <person name="Walter N."/>
            <person name="Hoogland C."/>
            <person name="Appel R.D."/>
            <person name="Sanchez J.-C."/>
            <person name="Zimmermann-Ivol C.G."/>
            <person name="Corthals G.L."/>
            <person name="Hochstrasser D.F."/>
            <person name="Schrenzel J."/>
        </authorList>
    </citation>
    <scope>IDENTIFICATION BY MASS SPECTROMETRY</scope>
    <source>
        <strain>N315</strain>
    </source>
</reference>
<dbReference type="EC" id="5.3.3.2" evidence="1"/>
<dbReference type="EMBL" id="BA000018">
    <property type="protein sequence ID" value="BAB43438.1"/>
    <property type="molecule type" value="Genomic_DNA"/>
</dbReference>
<dbReference type="PIR" id="E90034">
    <property type="entry name" value="E90034"/>
</dbReference>
<dbReference type="RefSeq" id="WP_001279375.1">
    <property type="nucleotide sequence ID" value="NC_002745.2"/>
</dbReference>
<dbReference type="SMR" id="P99172"/>
<dbReference type="EnsemblBacteria" id="BAB43438">
    <property type="protein sequence ID" value="BAB43438"/>
    <property type="gene ID" value="BAB43438"/>
</dbReference>
<dbReference type="KEGG" id="sau:SA2136"/>
<dbReference type="HOGENOM" id="CLU_065515_0_0_9"/>
<dbReference type="GO" id="GO:0005737">
    <property type="term" value="C:cytoplasm"/>
    <property type="evidence" value="ECO:0007669"/>
    <property type="project" value="UniProtKB-SubCell"/>
</dbReference>
<dbReference type="GO" id="GO:0010181">
    <property type="term" value="F:FMN binding"/>
    <property type="evidence" value="ECO:0007669"/>
    <property type="project" value="UniProtKB-UniRule"/>
</dbReference>
<dbReference type="GO" id="GO:0004452">
    <property type="term" value="F:isopentenyl-diphosphate delta-isomerase activity"/>
    <property type="evidence" value="ECO:0007669"/>
    <property type="project" value="UniProtKB-UniRule"/>
</dbReference>
<dbReference type="GO" id="GO:0000287">
    <property type="term" value="F:magnesium ion binding"/>
    <property type="evidence" value="ECO:0007669"/>
    <property type="project" value="UniProtKB-UniRule"/>
</dbReference>
<dbReference type="GO" id="GO:0070402">
    <property type="term" value="F:NADPH binding"/>
    <property type="evidence" value="ECO:0007669"/>
    <property type="project" value="UniProtKB-UniRule"/>
</dbReference>
<dbReference type="GO" id="GO:0016491">
    <property type="term" value="F:oxidoreductase activity"/>
    <property type="evidence" value="ECO:0007669"/>
    <property type="project" value="InterPro"/>
</dbReference>
<dbReference type="GO" id="GO:0008299">
    <property type="term" value="P:isoprenoid biosynthetic process"/>
    <property type="evidence" value="ECO:0007669"/>
    <property type="project" value="UniProtKB-UniRule"/>
</dbReference>
<dbReference type="CDD" id="cd02811">
    <property type="entry name" value="IDI-2_FMN"/>
    <property type="match status" value="1"/>
</dbReference>
<dbReference type="Gene3D" id="3.20.20.70">
    <property type="entry name" value="Aldolase class I"/>
    <property type="match status" value="1"/>
</dbReference>
<dbReference type="HAMAP" id="MF_00354">
    <property type="entry name" value="Idi_2"/>
    <property type="match status" value="1"/>
</dbReference>
<dbReference type="InterPro" id="IPR013785">
    <property type="entry name" value="Aldolase_TIM"/>
</dbReference>
<dbReference type="InterPro" id="IPR000262">
    <property type="entry name" value="FMN-dep_DH"/>
</dbReference>
<dbReference type="InterPro" id="IPR011179">
    <property type="entry name" value="IPdP_isomerase"/>
</dbReference>
<dbReference type="NCBIfam" id="TIGR02151">
    <property type="entry name" value="IPP_isom_2"/>
    <property type="match status" value="1"/>
</dbReference>
<dbReference type="PANTHER" id="PTHR43665">
    <property type="entry name" value="ISOPENTENYL-DIPHOSPHATE DELTA-ISOMERASE"/>
    <property type="match status" value="1"/>
</dbReference>
<dbReference type="PANTHER" id="PTHR43665:SF1">
    <property type="entry name" value="ISOPENTENYL-DIPHOSPHATE DELTA-ISOMERASE"/>
    <property type="match status" value="1"/>
</dbReference>
<dbReference type="Pfam" id="PF01070">
    <property type="entry name" value="FMN_dh"/>
    <property type="match status" value="1"/>
</dbReference>
<dbReference type="PIRSF" id="PIRSF003314">
    <property type="entry name" value="IPP_isomerase"/>
    <property type="match status" value="1"/>
</dbReference>
<dbReference type="SUPFAM" id="SSF51395">
    <property type="entry name" value="FMN-linked oxidoreductases"/>
    <property type="match status" value="1"/>
</dbReference>
<comment type="function">
    <text evidence="1">Involved in the biosynthesis of isoprenoids. Catalyzes the 1,3-allylic rearrangement of the homoallylic substrate isopentenyl (IPP) to its allylic isomer, dimethylallyl diphosphate (DMAPP).</text>
</comment>
<comment type="catalytic activity">
    <reaction evidence="1">
        <text>isopentenyl diphosphate = dimethylallyl diphosphate</text>
        <dbReference type="Rhea" id="RHEA:23284"/>
        <dbReference type="ChEBI" id="CHEBI:57623"/>
        <dbReference type="ChEBI" id="CHEBI:128769"/>
        <dbReference type="EC" id="5.3.3.2"/>
    </reaction>
</comment>
<comment type="cofactor">
    <cofactor evidence="1">
        <name>FMN</name>
        <dbReference type="ChEBI" id="CHEBI:58210"/>
    </cofactor>
</comment>
<comment type="cofactor">
    <cofactor evidence="1">
        <name>NADPH</name>
        <dbReference type="ChEBI" id="CHEBI:57783"/>
    </cofactor>
</comment>
<comment type="cofactor">
    <cofactor evidence="1">
        <name>Mg(2+)</name>
        <dbReference type="ChEBI" id="CHEBI:18420"/>
    </cofactor>
</comment>
<comment type="subunit">
    <text evidence="1">Homooctamer. Dimer of tetramers.</text>
</comment>
<comment type="subcellular location">
    <subcellularLocation>
        <location evidence="1">Cytoplasm</location>
    </subcellularLocation>
</comment>
<comment type="similarity">
    <text evidence="1">Belongs to the IPP isomerase type 2 family.</text>
</comment>
<organism>
    <name type="scientific">Staphylococcus aureus (strain N315)</name>
    <dbReference type="NCBI Taxonomy" id="158879"/>
    <lineage>
        <taxon>Bacteria</taxon>
        <taxon>Bacillati</taxon>
        <taxon>Bacillota</taxon>
        <taxon>Bacilli</taxon>
        <taxon>Bacillales</taxon>
        <taxon>Staphylococcaceae</taxon>
        <taxon>Staphylococcus</taxon>
    </lineage>
</organism>
<sequence length="349" mass="38874">MSDFQREQRKNEHVEIAMAQSDAMHSDFDKMRFVHHSIPSINVNDIDLTSQTPDLTMAYPIYINAMTGGSEWTKNINEKLAVVARETRLAMAVGSTHAALRNPRMAETFTIARKMNPEGMIFSNVGADVPVEKALEAVELLEAQALQIHVNSPQELVMPEGNREFVTWLDNIASIVSRVSVPVIIKEVGFGMSKELMHDLQQIGVKYVDVSGKGGTNFVDIENERRANKDMDYLSSWGQSTVESLLETTAYQSEISVFASGGLRTPLDAIKSLALGAKATGMSRPFLNQVENNGIAHTVAYVESFIEHMKSIMTMLDAKNIDDLTQKQIVFSPEIMSWIEQRSLNIHRG</sequence>